<proteinExistence type="evidence at protein level"/>
<comment type="function">
    <text evidence="5 6 9">Probable transcription factor involved in the regulation of meristem development to promote lateral organ formation. May regulates procambial and vascular tissue formation or maintenance, and vascular development in inflorescence stems.</text>
</comment>
<comment type="subunit">
    <text evidence="11 12">Interacts with ESR1 and ESR2 (PubMed:17376809). Interacts with ZPR3 (PubMed:18408069).</text>
</comment>
<comment type="subcellular location">
    <subcellularLocation>
        <location evidence="13">Nucleus</location>
    </subcellularLocation>
</comment>
<comment type="alternative products">
    <event type="alternative splicing"/>
    <isoform>
        <id>Q9ZU11-1</id>
        <name>1</name>
        <sequence type="displayed"/>
    </isoform>
    <text>A number of isoforms are produced. According to EST sequences.</text>
</comment>
<comment type="tissue specificity">
    <text evidence="4 6">Highly expressed the developing vascular elements and the adaxial portion of cotyledons. Expressed in developing ovules, stamens and carpels. Expressed in procambium and shoot meristem.</text>
</comment>
<comment type="induction">
    <text evidence="7 8 9 10">By auxin. Repressed by miR165 and miR166.</text>
</comment>
<comment type="similarity">
    <text evidence="13">Belongs to the HD-ZIP homeobox family. Class III subfamily.</text>
</comment>
<feature type="chain" id="PRO_0000331661" description="Homeobox-leucine zipper protein ATHB-15">
    <location>
        <begin position="1"/>
        <end position="836"/>
    </location>
</feature>
<feature type="domain" description="START" evidence="3">
    <location>
        <begin position="151"/>
        <end position="379"/>
    </location>
</feature>
<feature type="DNA-binding region" description="Homeobox" evidence="2">
    <location>
        <begin position="14"/>
        <end position="77"/>
    </location>
</feature>
<feature type="coiled-coil region" evidence="1">
    <location>
        <begin position="72"/>
        <end position="115"/>
    </location>
</feature>
<feature type="mutagenesis site" description="In icu4-1 and icu4-2; gain of function. Delayed in juvenile-to-adult and flowering phase change and increased number of vegetative leaves, which lack abaxial trichomes." evidence="9">
    <original>G</original>
    <variation>D</variation>
    <location>
        <position position="189"/>
    </location>
</feature>
<feature type="mutagenesis site" description="In cna-1; dominant negative. Loss of organogenesis and formation of ring-like corona meristems." evidence="6">
    <original>A</original>
    <variation>V</variation>
    <location>
        <position position="606"/>
    </location>
</feature>
<feature type="sequence conflict" description="In Ref. 1; AAW88440." evidence="13" ref="1">
    <original>V</original>
    <variation>I</variation>
    <location>
        <position position="181"/>
    </location>
</feature>
<feature type="sequence conflict" description="In Ref. 1; AAW88440." evidence="13" ref="1">
    <original>E</original>
    <variation>D</variation>
    <location>
        <position position="238"/>
    </location>
</feature>
<feature type="sequence conflict" description="In Ref. 1; AAW88440." evidence="13" ref="1">
    <original>Q</original>
    <variation>L</variation>
    <location>
        <position position="622"/>
    </location>
</feature>
<feature type="sequence conflict" description="In Ref. 1; AAW88440." evidence="13" ref="1">
    <original>A</original>
    <variation>T</variation>
    <location>
        <position position="629"/>
    </location>
</feature>
<accession>Q9ZU11</accession>
<accession>Q5EE12</accession>
<accession>Q9FWZ0</accession>
<keyword id="KW-0025">Alternative splicing</keyword>
<keyword id="KW-0175">Coiled coil</keyword>
<keyword id="KW-0221">Differentiation</keyword>
<keyword id="KW-0238">DNA-binding</keyword>
<keyword id="KW-0371">Homeobox</keyword>
<keyword id="KW-0539">Nucleus</keyword>
<keyword id="KW-1185">Reference proteome</keyword>
<keyword id="KW-0804">Transcription</keyword>
<keyword id="KW-0805">Transcription regulation</keyword>
<evidence type="ECO:0000255" key="1"/>
<evidence type="ECO:0000255" key="2">
    <source>
        <dbReference type="PROSITE-ProRule" id="PRU00108"/>
    </source>
</evidence>
<evidence type="ECO:0000255" key="3">
    <source>
        <dbReference type="PROSITE-ProRule" id="PRU00197"/>
    </source>
</evidence>
<evidence type="ECO:0000269" key="4">
    <source>
    </source>
</evidence>
<evidence type="ECO:0000269" key="5">
    <source>
    </source>
</evidence>
<evidence type="ECO:0000269" key="6">
    <source>
    </source>
</evidence>
<evidence type="ECO:0000269" key="7">
    <source>
    </source>
</evidence>
<evidence type="ECO:0000269" key="8">
    <source>
    </source>
</evidence>
<evidence type="ECO:0000269" key="9">
    <source>
    </source>
</evidence>
<evidence type="ECO:0000269" key="10">
    <source>
    </source>
</evidence>
<evidence type="ECO:0000269" key="11">
    <source>
    </source>
</evidence>
<evidence type="ECO:0000269" key="12">
    <source>
    </source>
</evidence>
<evidence type="ECO:0000305" key="13"/>
<reference key="1">
    <citation type="journal article" date="2005" name="Plant Cell">
        <title>CORONA, a member of the class III homeodomain leucine zipper gene family in Arabidopsis, regulates stem cell specification and organogenesis.</title>
        <authorList>
            <person name="Green K.A."/>
            <person name="Prigge M.J."/>
            <person name="Katzman R.B."/>
            <person name="Clark S.E."/>
        </authorList>
    </citation>
    <scope>NUCLEOTIDE SEQUENCE [GENOMIC DNA]</scope>
    <scope>FUNCTION</scope>
    <scope>TISSUE SPECIFICITY</scope>
    <scope>MUTAGENESIS OF ALA-606</scope>
    <source>
        <strain>cv. Landsberg erecta</strain>
    </source>
</reference>
<reference key="2">
    <citation type="submission" date="2002-03" db="EMBL/GenBank/DDBJ databases">
        <title>Nucleotide sequence of the Arabidopsis ATHB-15 mRNA, encoding an HD-Zip III protein related to ATHB-8.</title>
        <authorList>
            <person name="Ruzza V."/>
            <person name="Carabelli M."/>
            <person name="Ciarbelli A.R."/>
            <person name="Sessa G."/>
            <person name="Steindler C."/>
            <person name="Ruberti I."/>
        </authorList>
    </citation>
    <scope>NUCLEOTIDE SEQUENCE [MRNA]</scope>
    <source>
        <strain>cv. Columbia</strain>
    </source>
</reference>
<reference key="3">
    <citation type="journal article" date="2000" name="Nature">
        <title>Sequence and analysis of chromosome 1 of the plant Arabidopsis thaliana.</title>
        <authorList>
            <person name="Theologis A."/>
            <person name="Ecker J.R."/>
            <person name="Palm C.J."/>
            <person name="Federspiel N.A."/>
            <person name="Kaul S."/>
            <person name="White O."/>
            <person name="Alonso J."/>
            <person name="Altafi H."/>
            <person name="Araujo R."/>
            <person name="Bowman C.L."/>
            <person name="Brooks S.Y."/>
            <person name="Buehler E."/>
            <person name="Chan A."/>
            <person name="Chao Q."/>
            <person name="Chen H."/>
            <person name="Cheuk R.F."/>
            <person name="Chin C.W."/>
            <person name="Chung M.K."/>
            <person name="Conn L."/>
            <person name="Conway A.B."/>
            <person name="Conway A.R."/>
            <person name="Creasy T.H."/>
            <person name="Dewar K."/>
            <person name="Dunn P."/>
            <person name="Etgu P."/>
            <person name="Feldblyum T.V."/>
            <person name="Feng J.-D."/>
            <person name="Fong B."/>
            <person name="Fujii C.Y."/>
            <person name="Gill J.E."/>
            <person name="Goldsmith A.D."/>
            <person name="Haas B."/>
            <person name="Hansen N.F."/>
            <person name="Hughes B."/>
            <person name="Huizar L."/>
            <person name="Hunter J.L."/>
            <person name="Jenkins J."/>
            <person name="Johnson-Hopson C."/>
            <person name="Khan S."/>
            <person name="Khaykin E."/>
            <person name="Kim C.J."/>
            <person name="Koo H.L."/>
            <person name="Kremenetskaia I."/>
            <person name="Kurtz D.B."/>
            <person name="Kwan A."/>
            <person name="Lam B."/>
            <person name="Langin-Hooper S."/>
            <person name="Lee A."/>
            <person name="Lee J.M."/>
            <person name="Lenz C.A."/>
            <person name="Li J.H."/>
            <person name="Li Y.-P."/>
            <person name="Lin X."/>
            <person name="Liu S.X."/>
            <person name="Liu Z.A."/>
            <person name="Luros J.S."/>
            <person name="Maiti R."/>
            <person name="Marziali A."/>
            <person name="Militscher J."/>
            <person name="Miranda M."/>
            <person name="Nguyen M."/>
            <person name="Nierman W.C."/>
            <person name="Osborne B.I."/>
            <person name="Pai G."/>
            <person name="Peterson J."/>
            <person name="Pham P.K."/>
            <person name="Rizzo M."/>
            <person name="Rooney T."/>
            <person name="Rowley D."/>
            <person name="Sakano H."/>
            <person name="Salzberg S.L."/>
            <person name="Schwartz J.R."/>
            <person name="Shinn P."/>
            <person name="Southwick A.M."/>
            <person name="Sun H."/>
            <person name="Tallon L.J."/>
            <person name="Tambunga G."/>
            <person name="Toriumi M.J."/>
            <person name="Town C.D."/>
            <person name="Utterback T."/>
            <person name="Van Aken S."/>
            <person name="Vaysberg M."/>
            <person name="Vysotskaia V.S."/>
            <person name="Walker M."/>
            <person name="Wu D."/>
            <person name="Yu G."/>
            <person name="Fraser C.M."/>
            <person name="Venter J.C."/>
            <person name="Davis R.W."/>
        </authorList>
    </citation>
    <scope>NUCLEOTIDE SEQUENCE [LARGE SCALE GENOMIC DNA]</scope>
    <source>
        <strain>cv. Columbia</strain>
    </source>
</reference>
<reference key="4">
    <citation type="journal article" date="2017" name="Plant J.">
        <title>Araport11: a complete reannotation of the Arabidopsis thaliana reference genome.</title>
        <authorList>
            <person name="Cheng C.Y."/>
            <person name="Krishnakumar V."/>
            <person name="Chan A.P."/>
            <person name="Thibaud-Nissen F."/>
            <person name="Schobel S."/>
            <person name="Town C.D."/>
        </authorList>
    </citation>
    <scope>GENOME REANNOTATION</scope>
    <source>
        <strain>cv. Columbia</strain>
    </source>
</reference>
<reference key="5">
    <citation type="journal article" date="2003" name="Science">
        <title>Empirical analysis of transcriptional activity in the Arabidopsis genome.</title>
        <authorList>
            <person name="Yamada K."/>
            <person name="Lim J."/>
            <person name="Dale J.M."/>
            <person name="Chen H."/>
            <person name="Shinn P."/>
            <person name="Palm C.J."/>
            <person name="Southwick A.M."/>
            <person name="Wu H.C."/>
            <person name="Kim C.J."/>
            <person name="Nguyen M."/>
            <person name="Pham P.K."/>
            <person name="Cheuk R.F."/>
            <person name="Karlin-Newmann G."/>
            <person name="Liu S.X."/>
            <person name="Lam B."/>
            <person name="Sakano H."/>
            <person name="Wu T."/>
            <person name="Yu G."/>
            <person name="Miranda M."/>
            <person name="Quach H.L."/>
            <person name="Tripp M."/>
            <person name="Chang C.H."/>
            <person name="Lee J.M."/>
            <person name="Toriumi M.J."/>
            <person name="Chan M.M."/>
            <person name="Tang C.C."/>
            <person name="Onodera C.S."/>
            <person name="Deng J.M."/>
            <person name="Akiyama K."/>
            <person name="Ansari Y."/>
            <person name="Arakawa T."/>
            <person name="Banh J."/>
            <person name="Banno F."/>
            <person name="Bowser L."/>
            <person name="Brooks S.Y."/>
            <person name="Carninci P."/>
            <person name="Chao Q."/>
            <person name="Choy N."/>
            <person name="Enju A."/>
            <person name="Goldsmith A.D."/>
            <person name="Gurjal M."/>
            <person name="Hansen N.F."/>
            <person name="Hayashizaki Y."/>
            <person name="Johnson-Hopson C."/>
            <person name="Hsuan V.W."/>
            <person name="Iida K."/>
            <person name="Karnes M."/>
            <person name="Khan S."/>
            <person name="Koesema E."/>
            <person name="Ishida J."/>
            <person name="Jiang P.X."/>
            <person name="Jones T."/>
            <person name="Kawai J."/>
            <person name="Kamiya A."/>
            <person name="Meyers C."/>
            <person name="Nakajima M."/>
            <person name="Narusaka M."/>
            <person name="Seki M."/>
            <person name="Sakurai T."/>
            <person name="Satou M."/>
            <person name="Tamse R."/>
            <person name="Vaysberg M."/>
            <person name="Wallender E.K."/>
            <person name="Wong C."/>
            <person name="Yamamura Y."/>
            <person name="Yuan S."/>
            <person name="Shinozaki K."/>
            <person name="Davis R.W."/>
            <person name="Theologis A."/>
            <person name="Ecker J.R."/>
        </authorList>
    </citation>
    <scope>NUCLEOTIDE SEQUENCE [LARGE SCALE MRNA]</scope>
    <source>
        <strain>cv. Columbia</strain>
    </source>
</reference>
<reference key="6">
    <citation type="journal article" date="2003" name="Plant Cell Physiol.">
        <title>HD-zip III homeobox genes that include a novel member, ZeHB-13 (Zinnia)/ATHB-15 (Arabidopsis), are involved in procambium and xylem cell differentiation.</title>
        <authorList>
            <person name="Ohashi-Ito K."/>
            <person name="Fukuda H."/>
        </authorList>
    </citation>
    <scope>TISSUE SPECIFICITY</scope>
</reference>
<reference key="7">
    <citation type="journal article" date="2005" name="Development">
        <title>Regulation of Arabidopsis shoot apical meristem and lateral organ formation by microRNA miR166g and its AtHD-ZIP target genes.</title>
        <authorList>
            <person name="Williams L."/>
            <person name="Grigg S.P."/>
            <person name="Xie M."/>
            <person name="Christensen S."/>
            <person name="Fletcher J.C."/>
        </authorList>
    </citation>
    <scope>INDUCTION</scope>
</reference>
<reference key="8">
    <citation type="journal article" date="2005" name="Plant Cell">
        <title>Class III homeodomain-leucine zipper gene family members have overlapping, antagonistic, and distinct roles in Arabidopsis development.</title>
        <authorList>
            <person name="Prigge M.J."/>
            <person name="Otsuga D."/>
            <person name="Alonso J.M."/>
            <person name="Ecker J.R."/>
            <person name="Drews G.N."/>
            <person name="Clark S.E."/>
        </authorList>
    </citation>
    <scope>FUNCTION</scope>
</reference>
<reference key="9">
    <citation type="journal article" date="2005" name="Plant J.">
        <title>microRNA-directed cleavage of ATHB15 mRNA regulates vascular development in Arabidopsis inflorescence stems.</title>
        <authorList>
            <person name="Kim J."/>
            <person name="Jung J.-H."/>
            <person name="Reyes J.L."/>
            <person name="Kim Y.-S."/>
            <person name="Kim S.-Y."/>
            <person name="Chung K.-S."/>
            <person name="Kim J.A."/>
            <person name="Lee M."/>
            <person name="Lee Y."/>
            <person name="Kim V.N."/>
            <person name="Chua N.-H."/>
            <person name="Park C.-M."/>
        </authorList>
    </citation>
    <scope>INDUCTION</scope>
</reference>
<reference key="10">
    <citation type="journal article" date="2006" name="Evol. Dev.">
        <title>Evolution of the class III HD-Zip gene family in land plants.</title>
        <authorList>
            <person name="Prigge M.J."/>
            <person name="Clark S.E."/>
        </authorList>
    </citation>
    <scope>GENE FAMILY</scope>
</reference>
<reference key="11">
    <citation type="journal article" date="2006" name="Plant Physiol.">
        <title>Mutations in the microRNA complementarity site of the INCURVATA4 gene perturb meristem function and adaxialize lateral organs in arabidopsis.</title>
        <authorList>
            <person name="Ochando I."/>
            <person name="Jover-Gil S."/>
            <person name="Ripoll J.J."/>
            <person name="Candela H."/>
            <person name="Vera A."/>
            <person name="Ponce M.R."/>
            <person name="Martinez-Laborda A."/>
            <person name="Micol J.L."/>
        </authorList>
    </citation>
    <scope>FUNCTION</scope>
    <scope>INDUCTION</scope>
    <scope>MUTAGENESIS OF GLY-189</scope>
</reference>
<reference key="12">
    <citation type="journal article" date="2007" name="Development">
        <title>The AP2 transcription factors DORNROSCHEN and DORNROSCHEN-LIKE redundantly control Arabidopsis embryo patterning via interaction with PHAVOLUTA.</title>
        <authorList>
            <person name="Chandler J.W."/>
            <person name="Cole M."/>
            <person name="Flier A."/>
            <person name="Grewe B."/>
            <person name="Werr W."/>
        </authorList>
    </citation>
    <scope>INTERACTION WITH ESR1 AND ESR2</scope>
</reference>
<reference key="13">
    <citation type="journal article" date="2007" name="Plant Cell Physiol.">
        <title>Overexpression of miR165 affects apical meristem formation, organ polarity establishment and vascular development in Arabidopsis.</title>
        <authorList>
            <person name="Zhou G.-K."/>
            <person name="Kubo M."/>
            <person name="Zhong R."/>
            <person name="Demura T."/>
            <person name="Ye Z.-H."/>
        </authorList>
    </citation>
    <scope>INDUCTION</scope>
</reference>
<reference key="14">
    <citation type="journal article" date="2008" name="Plant Cell">
        <title>HD-ZIP III activity is modulated by competitive inhibitors via a feedback loop in Arabidopsis shoot apical meristem development.</title>
        <authorList>
            <person name="Kim Y.S."/>
            <person name="Kim S.G."/>
            <person name="Lee M."/>
            <person name="Lee I."/>
            <person name="Park H.Y."/>
            <person name="Seo P.J."/>
            <person name="Jung J.H."/>
            <person name="Kwon E.J."/>
            <person name="Suh S.W."/>
            <person name="Paek K.H."/>
            <person name="Park C.M."/>
        </authorList>
    </citation>
    <scope>INTERACTION WITH ZPR3</scope>
</reference>
<reference key="15">
    <citation type="journal article" date="2014" name="Mol. Phylogenet. Evol.">
        <title>Origin of a novel regulatory module by duplication and degeneration of an ancient plant transcription factor.</title>
        <authorList>
            <person name="Floyd S.K."/>
            <person name="Ryan J.G."/>
            <person name="Conway S.J."/>
            <person name="Brenner E."/>
            <person name="Burris K.P."/>
            <person name="Burris J.N."/>
            <person name="Chen T."/>
            <person name="Edger P.P."/>
            <person name="Graham S.W."/>
            <person name="Leebens-Mack J.H."/>
            <person name="Pires J.C."/>
            <person name="Rothfels C.J."/>
            <person name="Sigel E.M."/>
            <person name="Stevenson D.W."/>
            <person name="Neal Stewart C. Jr."/>
            <person name="Wong G.K."/>
            <person name="Bowman J.L."/>
        </authorList>
    </citation>
    <scope>GENE FAMILY</scope>
</reference>
<sequence length="836" mass="91701">MAMSCKDGKLGCLDNGKYVRYTPEQVEALERLYHDCPKPSSIRRQQLIRECPILSNIEPKQIKVWFQNRRCREKQRKEASRLQAVNRKLTAMNKLLMEENDRLQKQVSQLVHENSYFRQHTPNPSLPAKDTSCESVVTSGQHQLASQNPQRDASPAGLLSIAEETLAEFLSKATGTAVEWVQMPGMKPGPDSIGIIAISHGCTGVAARACGLVGLEPTRVAEIVKDRPSWFRECRAVEVMNVLPTANGGTVELLYMQLYAPTTLAPPRDFWLLRYTSVLEDGSLVVCERSLKSTQNGPSMPLVQNFVRAEMLSSGYLIRPCDGGGSIIHIVDHMDLEACSVPEVLRPLYESPKVLAQKTTMAALRQLKQIAQEVTQTNSSVNGWGRRPAALRALSQRLSRGFNEAVNGFTDEGWSVIGDSMDDVTITVNSSPDKLMGLNLTFANGFAPVSNVVLCAKASMLLQNVPPAILLRFLREHRSEWADNNIDAYLAAAVKVGPCSARVGGFGGQVILPLAHTIEHEEFMEVIKLEGLGHSPEDAIVPRDIFLLQLCSGMDENAVGTCAELIFAPIDASFADDAPLLPSGFRIIPLDSAKEVSSPNRTLDLASALEIGSAGTKASTDQSGNSTCARSVMTIAFEFGIESHMQEHVASMARQYVRGIISSVQRVALALSPSHISSQVGLRTPLGTPEAQTLARWICQSYRGYMGVELLKSNSDGNESILKNLWHHTDAIICCSMKALPVFTFANQAGLDMLETTLVALQDISLEKIFDDNGRKTLCSEFPQIMQQGFACLQGGICLSSMGRPVSYERAVAWKVLNEEENAHCICFVFINWSFV</sequence>
<organism>
    <name type="scientific">Arabidopsis thaliana</name>
    <name type="common">Mouse-ear cress</name>
    <dbReference type="NCBI Taxonomy" id="3702"/>
    <lineage>
        <taxon>Eukaryota</taxon>
        <taxon>Viridiplantae</taxon>
        <taxon>Streptophyta</taxon>
        <taxon>Embryophyta</taxon>
        <taxon>Tracheophyta</taxon>
        <taxon>Spermatophyta</taxon>
        <taxon>Magnoliopsida</taxon>
        <taxon>eudicotyledons</taxon>
        <taxon>Gunneridae</taxon>
        <taxon>Pentapetalae</taxon>
        <taxon>rosids</taxon>
        <taxon>malvids</taxon>
        <taxon>Brassicales</taxon>
        <taxon>Brassicaceae</taxon>
        <taxon>Camelineae</taxon>
        <taxon>Arabidopsis</taxon>
    </lineage>
</organism>
<gene>
    <name type="primary">ATHB-15</name>
    <name type="synonym">CNA</name>
    <name type="synonym">ICU4</name>
    <name type="ordered locus">At1g52150</name>
    <name type="ORF">F5F19.21</name>
    <name type="ORF">F9I5.18</name>
</gene>
<dbReference type="EMBL" id="AY902309">
    <property type="protein sequence ID" value="AAW88440.1"/>
    <property type="molecule type" value="Genomic_DNA"/>
</dbReference>
<dbReference type="EMBL" id="AJ439449">
    <property type="protein sequence ID" value="CAD28400.1"/>
    <property type="molecule type" value="mRNA"/>
</dbReference>
<dbReference type="EMBL" id="AC006216">
    <property type="protein sequence ID" value="AAD12689.1"/>
    <property type="molecule type" value="Genomic_DNA"/>
</dbReference>
<dbReference type="EMBL" id="AC022354">
    <property type="protein sequence ID" value="AAG26011.1"/>
    <property type="molecule type" value="Genomic_DNA"/>
</dbReference>
<dbReference type="EMBL" id="CP002684">
    <property type="protein sequence ID" value="AEE32760.1"/>
    <property type="molecule type" value="Genomic_DNA"/>
</dbReference>
<dbReference type="EMBL" id="AY060556">
    <property type="protein sequence ID" value="AAL31186.1"/>
    <property type="molecule type" value="mRNA"/>
</dbReference>
<dbReference type="PIR" id="E96561">
    <property type="entry name" value="E96561"/>
</dbReference>
<dbReference type="RefSeq" id="NP_175627.1">
    <molecule id="Q9ZU11-1"/>
    <property type="nucleotide sequence ID" value="NM_104096.3"/>
</dbReference>
<dbReference type="SMR" id="Q9ZU11"/>
<dbReference type="BioGRID" id="26870">
    <property type="interactions" value="2"/>
</dbReference>
<dbReference type="FunCoup" id="Q9ZU11">
    <property type="interactions" value="937"/>
</dbReference>
<dbReference type="STRING" id="3702.Q9ZU11"/>
<dbReference type="PaxDb" id="3702-AT1G52150.2"/>
<dbReference type="ProteomicsDB" id="246718">
    <molecule id="Q9ZU11-1"/>
</dbReference>
<dbReference type="EnsemblPlants" id="AT1G52150.1">
    <molecule id="Q9ZU11-1"/>
    <property type="protein sequence ID" value="AT1G52150.1"/>
    <property type="gene ID" value="AT1G52150"/>
</dbReference>
<dbReference type="GeneID" id="841645"/>
<dbReference type="Gramene" id="AT1G52150.1">
    <molecule id="Q9ZU11-1"/>
    <property type="protein sequence ID" value="AT1G52150.1"/>
    <property type="gene ID" value="AT1G52150"/>
</dbReference>
<dbReference type="KEGG" id="ath:AT1G52150"/>
<dbReference type="Araport" id="AT1G52150"/>
<dbReference type="TAIR" id="AT1G52150">
    <property type="gene designation" value="ATHB-15"/>
</dbReference>
<dbReference type="eggNOG" id="ENOG502QPKR">
    <property type="taxonomic scope" value="Eukaryota"/>
</dbReference>
<dbReference type="HOGENOM" id="CLU_012517_0_0_1"/>
<dbReference type="InParanoid" id="Q9ZU11"/>
<dbReference type="PhylomeDB" id="Q9ZU11"/>
<dbReference type="PRO" id="PR:Q9ZU11"/>
<dbReference type="Proteomes" id="UP000006548">
    <property type="component" value="Chromosome 1"/>
</dbReference>
<dbReference type="ExpressionAtlas" id="Q9ZU11">
    <property type="expression patterns" value="baseline and differential"/>
</dbReference>
<dbReference type="GO" id="GO:0005634">
    <property type="term" value="C:nucleus"/>
    <property type="evidence" value="ECO:0007669"/>
    <property type="project" value="UniProtKB-SubCell"/>
</dbReference>
<dbReference type="GO" id="GO:0003677">
    <property type="term" value="F:DNA binding"/>
    <property type="evidence" value="ECO:0007669"/>
    <property type="project" value="UniProtKB-KW"/>
</dbReference>
<dbReference type="GO" id="GO:0003700">
    <property type="term" value="F:DNA-binding transcription factor activity"/>
    <property type="evidence" value="ECO:0007669"/>
    <property type="project" value="InterPro"/>
</dbReference>
<dbReference type="GO" id="GO:0008289">
    <property type="term" value="F:lipid binding"/>
    <property type="evidence" value="ECO:0007669"/>
    <property type="project" value="InterPro"/>
</dbReference>
<dbReference type="GO" id="GO:0030154">
    <property type="term" value="P:cell differentiation"/>
    <property type="evidence" value="ECO:0007669"/>
    <property type="project" value="UniProtKB-KW"/>
</dbReference>
<dbReference type="CDD" id="cd14686">
    <property type="entry name" value="bZIP"/>
    <property type="match status" value="1"/>
</dbReference>
<dbReference type="CDD" id="cd00086">
    <property type="entry name" value="homeodomain"/>
    <property type="match status" value="1"/>
</dbReference>
<dbReference type="CDD" id="cd08875">
    <property type="entry name" value="START_ArGLABRA2_like"/>
    <property type="match status" value="1"/>
</dbReference>
<dbReference type="FunFam" id="3.30.530.20:FF:000020">
    <property type="entry name" value="homeobox-leucine zipper protein ATHB-15"/>
    <property type="match status" value="1"/>
</dbReference>
<dbReference type="FunFam" id="1.10.10.60:FF:000197">
    <property type="entry name" value="Homeobox-leucine zipper protein REVOLUTA"/>
    <property type="match status" value="1"/>
</dbReference>
<dbReference type="Gene3D" id="3.30.530.20">
    <property type="match status" value="1"/>
</dbReference>
<dbReference type="Gene3D" id="1.10.10.60">
    <property type="entry name" value="Homeodomain-like"/>
    <property type="match status" value="1"/>
</dbReference>
<dbReference type="InterPro" id="IPR001356">
    <property type="entry name" value="HD"/>
</dbReference>
<dbReference type="InterPro" id="IPR044830">
    <property type="entry name" value="HD-Zip_III"/>
</dbReference>
<dbReference type="InterPro" id="IPR009057">
    <property type="entry name" value="Homeodomain-like_sf"/>
</dbReference>
<dbReference type="InterPro" id="IPR013978">
    <property type="entry name" value="MEKHLA"/>
</dbReference>
<dbReference type="InterPro" id="IPR023393">
    <property type="entry name" value="START-like_dom_sf"/>
</dbReference>
<dbReference type="InterPro" id="IPR002913">
    <property type="entry name" value="START_lipid-bd_dom"/>
</dbReference>
<dbReference type="PANTHER" id="PTHR45950">
    <property type="entry name" value="HOMEOBOX-LEUCINE ZIPPER PROTEIN ATHB-14"/>
    <property type="match status" value="1"/>
</dbReference>
<dbReference type="PANTHER" id="PTHR45950:SF1">
    <property type="entry name" value="HOMEOBOX-LEUCINE ZIPPER PROTEIN ATHB-15"/>
    <property type="match status" value="1"/>
</dbReference>
<dbReference type="Pfam" id="PF00046">
    <property type="entry name" value="Homeodomain"/>
    <property type="match status" value="1"/>
</dbReference>
<dbReference type="Pfam" id="PF08670">
    <property type="entry name" value="MEKHLA"/>
    <property type="match status" value="1"/>
</dbReference>
<dbReference type="Pfam" id="PF01852">
    <property type="entry name" value="START"/>
    <property type="match status" value="1"/>
</dbReference>
<dbReference type="SMART" id="SM00389">
    <property type="entry name" value="HOX"/>
    <property type="match status" value="1"/>
</dbReference>
<dbReference type="SMART" id="SM00234">
    <property type="entry name" value="START"/>
    <property type="match status" value="1"/>
</dbReference>
<dbReference type="SUPFAM" id="SSF55961">
    <property type="entry name" value="Bet v1-like"/>
    <property type="match status" value="1"/>
</dbReference>
<dbReference type="SUPFAM" id="SSF46689">
    <property type="entry name" value="Homeodomain-like"/>
    <property type="match status" value="1"/>
</dbReference>
<dbReference type="PROSITE" id="PS50071">
    <property type="entry name" value="HOMEOBOX_2"/>
    <property type="match status" value="1"/>
</dbReference>
<dbReference type="PROSITE" id="PS50848">
    <property type="entry name" value="START"/>
    <property type="match status" value="1"/>
</dbReference>
<name>ATB15_ARATH</name>
<protein>
    <recommendedName>
        <fullName>Homeobox-leucine zipper protein ATHB-15</fullName>
    </recommendedName>
    <alternativeName>
        <fullName>HD-ZIP protein ATHB-15</fullName>
    </alternativeName>
    <alternativeName>
        <fullName>Homeodomain transcription factor ATHB-15</fullName>
    </alternativeName>
    <alternativeName>
        <fullName>Protein CORONA</fullName>
    </alternativeName>
    <alternativeName>
        <fullName>Protein INCURVATA 4</fullName>
    </alternativeName>
</protein>